<dbReference type="EC" id="2.6.1.9"/>
<dbReference type="EMBL" id="AE005673">
    <property type="protein sequence ID" value="AAK24505.1"/>
    <property type="molecule type" value="Genomic_DNA"/>
</dbReference>
<dbReference type="PIR" id="E87563">
    <property type="entry name" value="E87563"/>
</dbReference>
<dbReference type="RefSeq" id="NP_421337.1">
    <property type="nucleotide sequence ID" value="NC_002696.2"/>
</dbReference>
<dbReference type="RefSeq" id="WP_010920391.1">
    <property type="nucleotide sequence ID" value="NC_002696.2"/>
</dbReference>
<dbReference type="SMR" id="Q9A5B6"/>
<dbReference type="STRING" id="190650.CC_2534"/>
<dbReference type="EnsemblBacteria" id="AAK24505">
    <property type="protein sequence ID" value="AAK24505"/>
    <property type="gene ID" value="CC_2534"/>
</dbReference>
<dbReference type="KEGG" id="ccr:CC_2534"/>
<dbReference type="PATRIC" id="fig|190650.5.peg.2548"/>
<dbReference type="eggNOG" id="COG0079">
    <property type="taxonomic scope" value="Bacteria"/>
</dbReference>
<dbReference type="HOGENOM" id="CLU_017584_3_3_5"/>
<dbReference type="BioCyc" id="CAULO:CC2534-MONOMER"/>
<dbReference type="UniPathway" id="UPA00031">
    <property type="reaction ID" value="UER00012"/>
</dbReference>
<dbReference type="Proteomes" id="UP000001816">
    <property type="component" value="Chromosome"/>
</dbReference>
<dbReference type="GO" id="GO:0004400">
    <property type="term" value="F:histidinol-phosphate transaminase activity"/>
    <property type="evidence" value="ECO:0007669"/>
    <property type="project" value="UniProtKB-UniRule"/>
</dbReference>
<dbReference type="GO" id="GO:0030170">
    <property type="term" value="F:pyridoxal phosphate binding"/>
    <property type="evidence" value="ECO:0007669"/>
    <property type="project" value="InterPro"/>
</dbReference>
<dbReference type="GO" id="GO:0000105">
    <property type="term" value="P:L-histidine biosynthetic process"/>
    <property type="evidence" value="ECO:0007669"/>
    <property type="project" value="UniProtKB-UniRule"/>
</dbReference>
<dbReference type="CDD" id="cd00609">
    <property type="entry name" value="AAT_like"/>
    <property type="match status" value="1"/>
</dbReference>
<dbReference type="Gene3D" id="3.90.1150.10">
    <property type="entry name" value="Aspartate Aminotransferase, domain 1"/>
    <property type="match status" value="1"/>
</dbReference>
<dbReference type="Gene3D" id="3.40.640.10">
    <property type="entry name" value="Type I PLP-dependent aspartate aminotransferase-like (Major domain)"/>
    <property type="match status" value="1"/>
</dbReference>
<dbReference type="HAMAP" id="MF_01023">
    <property type="entry name" value="HisC_aminotrans_2"/>
    <property type="match status" value="1"/>
</dbReference>
<dbReference type="InterPro" id="IPR001917">
    <property type="entry name" value="Aminotrans_II_pyridoxalP_BS"/>
</dbReference>
<dbReference type="InterPro" id="IPR004839">
    <property type="entry name" value="Aminotransferase_I/II_large"/>
</dbReference>
<dbReference type="InterPro" id="IPR005861">
    <property type="entry name" value="HisP_aminotrans"/>
</dbReference>
<dbReference type="InterPro" id="IPR050106">
    <property type="entry name" value="HistidinolP_aminotransfase"/>
</dbReference>
<dbReference type="InterPro" id="IPR015424">
    <property type="entry name" value="PyrdxlP-dep_Trfase"/>
</dbReference>
<dbReference type="InterPro" id="IPR015421">
    <property type="entry name" value="PyrdxlP-dep_Trfase_major"/>
</dbReference>
<dbReference type="InterPro" id="IPR015422">
    <property type="entry name" value="PyrdxlP-dep_Trfase_small"/>
</dbReference>
<dbReference type="NCBIfam" id="TIGR01141">
    <property type="entry name" value="hisC"/>
    <property type="match status" value="1"/>
</dbReference>
<dbReference type="PANTHER" id="PTHR43643:SF6">
    <property type="entry name" value="HISTIDINOL-PHOSPHATE AMINOTRANSFERASE"/>
    <property type="match status" value="1"/>
</dbReference>
<dbReference type="PANTHER" id="PTHR43643">
    <property type="entry name" value="HISTIDINOL-PHOSPHATE AMINOTRANSFERASE 2"/>
    <property type="match status" value="1"/>
</dbReference>
<dbReference type="Pfam" id="PF00155">
    <property type="entry name" value="Aminotran_1_2"/>
    <property type="match status" value="1"/>
</dbReference>
<dbReference type="SUPFAM" id="SSF53383">
    <property type="entry name" value="PLP-dependent transferases"/>
    <property type="match status" value="1"/>
</dbReference>
<dbReference type="PROSITE" id="PS00599">
    <property type="entry name" value="AA_TRANSFER_CLASS_2"/>
    <property type="match status" value="1"/>
</dbReference>
<name>HIS82_CAUVC</name>
<sequence length="378" mass="40386">MERGRMLVLDRKPLTPAWASPMRQALEGVQGYKAGMTLAEAARRTGLSAFSKLASNENLLGPSPKVAEAVMAAMAEPHIYPDPHSDVLRAAIGARLGVSPARVVVSPGSEALIDYVFRAVLHPGDSILLSSPTFPTYEIFGRCAEARIIDVPRLANFDIDVPAVCAAAALGPKLLVLCTPNNPTGNALKAADFQAILAATPRSTVVFVDEAYREYHEAFDTFAMLDAWGGPWVSARTFSKAYGLAGLRMGYGVASSPELVDYLDRIRPPFNVTAVSQAAALAAWEDQDYLKRTVDLTIAERGRVEAVLDDMGVEHTESHANFVFLRSPAGPEATAAHLLHQGLIIRPTPVAGGWVRITIGRPADNDALIAALPAALSL</sequence>
<gene>
    <name type="primary">hisC2</name>
    <name type="ordered locus">CC_2534</name>
</gene>
<feature type="chain" id="PRO_0000153343" description="Histidinol-phosphate aminotransferase 2">
    <location>
        <begin position="1"/>
        <end position="378"/>
    </location>
</feature>
<feature type="modified residue" description="N6-(pyridoxal phosphate)lysine" evidence="1">
    <location>
        <position position="240"/>
    </location>
</feature>
<evidence type="ECO:0000250" key="1"/>
<evidence type="ECO:0000305" key="2"/>
<organism>
    <name type="scientific">Caulobacter vibrioides (strain ATCC 19089 / CIP 103742 / CB 15)</name>
    <name type="common">Caulobacter crescentus</name>
    <dbReference type="NCBI Taxonomy" id="190650"/>
    <lineage>
        <taxon>Bacteria</taxon>
        <taxon>Pseudomonadati</taxon>
        <taxon>Pseudomonadota</taxon>
        <taxon>Alphaproteobacteria</taxon>
        <taxon>Caulobacterales</taxon>
        <taxon>Caulobacteraceae</taxon>
        <taxon>Caulobacter</taxon>
    </lineage>
</organism>
<keyword id="KW-0028">Amino-acid biosynthesis</keyword>
<keyword id="KW-0032">Aminotransferase</keyword>
<keyword id="KW-0368">Histidine biosynthesis</keyword>
<keyword id="KW-0663">Pyridoxal phosphate</keyword>
<keyword id="KW-1185">Reference proteome</keyword>
<keyword id="KW-0808">Transferase</keyword>
<reference key="1">
    <citation type="journal article" date="2001" name="Proc. Natl. Acad. Sci. U.S.A.">
        <title>Complete genome sequence of Caulobacter crescentus.</title>
        <authorList>
            <person name="Nierman W.C."/>
            <person name="Feldblyum T.V."/>
            <person name="Laub M.T."/>
            <person name="Paulsen I.T."/>
            <person name="Nelson K.E."/>
            <person name="Eisen J.A."/>
            <person name="Heidelberg J.F."/>
            <person name="Alley M.R.K."/>
            <person name="Ohta N."/>
            <person name="Maddock J.R."/>
            <person name="Potocka I."/>
            <person name="Nelson W.C."/>
            <person name="Newton A."/>
            <person name="Stephens C."/>
            <person name="Phadke N.D."/>
            <person name="Ely B."/>
            <person name="DeBoy R.T."/>
            <person name="Dodson R.J."/>
            <person name="Durkin A.S."/>
            <person name="Gwinn M.L."/>
            <person name="Haft D.H."/>
            <person name="Kolonay J.F."/>
            <person name="Smit J."/>
            <person name="Craven M.B."/>
            <person name="Khouri H.M."/>
            <person name="Shetty J."/>
            <person name="Berry K.J."/>
            <person name="Utterback T.R."/>
            <person name="Tran K."/>
            <person name="Wolf A.M."/>
            <person name="Vamathevan J.J."/>
            <person name="Ermolaeva M.D."/>
            <person name="White O."/>
            <person name="Salzberg S.L."/>
            <person name="Venter J.C."/>
            <person name="Shapiro L."/>
            <person name="Fraser C.M."/>
        </authorList>
    </citation>
    <scope>NUCLEOTIDE SEQUENCE [LARGE SCALE GENOMIC DNA]</scope>
    <source>
        <strain>ATCC 19089 / CIP 103742 / CB 15</strain>
    </source>
</reference>
<proteinExistence type="inferred from homology"/>
<protein>
    <recommendedName>
        <fullName>Histidinol-phosphate aminotransferase 2</fullName>
        <ecNumber>2.6.1.9</ecNumber>
    </recommendedName>
    <alternativeName>
        <fullName>Imidazole acetol-phosphate transaminase 2</fullName>
    </alternativeName>
</protein>
<accession>Q9A5B6</accession>
<comment type="catalytic activity">
    <reaction>
        <text>L-histidinol phosphate + 2-oxoglutarate = 3-(imidazol-4-yl)-2-oxopropyl phosphate + L-glutamate</text>
        <dbReference type="Rhea" id="RHEA:23744"/>
        <dbReference type="ChEBI" id="CHEBI:16810"/>
        <dbReference type="ChEBI" id="CHEBI:29985"/>
        <dbReference type="ChEBI" id="CHEBI:57766"/>
        <dbReference type="ChEBI" id="CHEBI:57980"/>
        <dbReference type="EC" id="2.6.1.9"/>
    </reaction>
</comment>
<comment type="cofactor">
    <cofactor evidence="1">
        <name>pyridoxal 5'-phosphate</name>
        <dbReference type="ChEBI" id="CHEBI:597326"/>
    </cofactor>
</comment>
<comment type="pathway">
    <text>Amino-acid biosynthesis; L-histidine biosynthesis; L-histidine from 5-phospho-alpha-D-ribose 1-diphosphate: step 7/9.</text>
</comment>
<comment type="subunit">
    <text evidence="1">Homodimer.</text>
</comment>
<comment type="similarity">
    <text evidence="2">Belongs to the class-II pyridoxal-phosphate-dependent aminotransferase family. Histidinol-phosphate aminotransferase subfamily.</text>
</comment>